<feature type="chain" id="PRO_0000084974" description="Catalase C">
    <location>
        <begin position="1"/>
        <end position="705"/>
    </location>
</feature>
<feature type="region of interest" description="Disordered" evidence="3">
    <location>
        <begin position="1"/>
        <end position="31"/>
    </location>
</feature>
<feature type="active site" evidence="2">
    <location>
        <position position="88"/>
    </location>
</feature>
<feature type="active site" evidence="2">
    <location>
        <position position="161"/>
    </location>
</feature>
<feature type="binding site" description="axial binding residue" evidence="1">
    <location>
        <position position="375"/>
    </location>
    <ligand>
        <name>heme</name>
        <dbReference type="ChEBI" id="CHEBI:30413"/>
    </ligand>
    <ligandPart>
        <name>Fe</name>
        <dbReference type="ChEBI" id="CHEBI:18248"/>
    </ligandPart>
</feature>
<feature type="sequence conflict" description="In Ref. 1." evidence="4" ref="1">
    <original>F</original>
    <variation>C</variation>
    <location>
        <position position="113"/>
    </location>
</feature>
<feature type="sequence conflict" description="In Ref. 1." evidence="4" ref="1">
    <original>R</original>
    <variation>H</variation>
    <location>
        <position position="115"/>
    </location>
</feature>
<feature type="sequence conflict" description="In Ref. 1; AAD21077." evidence="4" ref="1">
    <original>D</original>
    <variation>H</variation>
    <location>
        <position position="141"/>
    </location>
</feature>
<feature type="sequence conflict" description="In Ref. 1; AAD21077." evidence="4" ref="1">
    <original>D</original>
    <variation>H</variation>
    <location>
        <position position="186"/>
    </location>
</feature>
<feature type="sequence conflict" description="In Ref. 1; AAD21077." evidence="4" ref="1">
    <original>A</original>
    <variation>G</variation>
    <location>
        <position position="221"/>
    </location>
</feature>
<feature type="sequence conflict" description="In Ref. 1; AAD21077." evidence="4" ref="1">
    <original>V</original>
    <variation>L</variation>
    <location>
        <position position="262"/>
    </location>
</feature>
<feature type="sequence conflict" description="In Ref. 1; AAD21077." evidence="4" ref="1">
    <original>A</original>
    <variation>R</variation>
    <location>
        <position position="273"/>
    </location>
</feature>
<feature type="sequence conflict" description="In Ref. 1; AAD21077." evidence="4" ref="1">
    <original>I</original>
    <variation>V</variation>
    <location>
        <position position="319"/>
    </location>
</feature>
<feature type="sequence conflict" description="In Ref. 1." evidence="4" ref="1">
    <original>G</original>
    <variation>S</variation>
    <location>
        <position position="426"/>
    </location>
</feature>
<feature type="sequence conflict" description="In Ref. 1." evidence="4" ref="1">
    <location>
        <begin position="430"/>
        <end position="447"/>
    </location>
</feature>
<feature type="sequence conflict" description="In Ref. 1; AAD21077." evidence="4" ref="1">
    <original>A</original>
    <variation>G</variation>
    <location>
        <position position="575"/>
    </location>
</feature>
<feature type="sequence conflict" description="In Ref. 1; AAD21077." evidence="4" ref="1">
    <original>K</original>
    <variation>N</variation>
    <location>
        <position position="579"/>
    </location>
</feature>
<feature type="sequence conflict" description="In Ref. 1; AAD21077." evidence="4" ref="1">
    <original>T</original>
    <variation>A</variation>
    <location>
        <position position="629"/>
    </location>
</feature>
<sequence length="705" mass="78628">MAKKPSAPNNTKPATIHDQKATRGNGGELHQIAEGDTPVLTTAQGGPVADDQNSLRAGERGPTLIEDFHFREKIFHFDHERIPERVVHARGYGVHGFFETYESLAAYTRADLFQRPGERTPAFVRFSTVAGSKGSFDLARDVRGFAVKIYTKEGNWDLVGNNIPVFFIQDAIKFPDVIHSVKPEPDREFPQAQSAHDNFWDFISLTPESMHMIMWVMSDRAIPRSFRFMEGFGVHTFRFVNAKDESTFVKFHWKPKLGLQSVVWNEAVKINGADPDFHRRDMWQAIQSGNFPEWDLHVQLFDQDFADKFDFDILDPTKIIPEEVLPTKPVGRLVLDRMPENFFAETEQVAFMTQNVPPGIDFSDDPLLQGRNFSYLDTQLKRLGSPNFTHLPINAPKCPFQHFQQDGHMAMRNPVGRVNYQPNSWGEGPRESPMKGFRHFPSEEQGPKLRIRAESFADHYSQARQFFISQTPPEQRHIADALTFELSKVETPVIRERMVAHLLNIDETLGKKVGHALGLETMPKPADAAVATRQDLDPSPALSIIQRGPKRFEGRKLGILATDGADGALLDALIAAVEKEKAAFELIAPKVGGFTASDGKRIAAHQMLDGGPSVLYDAVVLLPSAEAVTDLIDVATARDFVADAFAHCKYIGYAGAAVPLLERAGIAELLDEGTIELTDAASAAAFLTEIGKLRVWGREPSVKLK</sequence>
<evidence type="ECO:0000250" key="1"/>
<evidence type="ECO:0000255" key="2">
    <source>
        <dbReference type="PROSITE-ProRule" id="PRU10013"/>
    </source>
</evidence>
<evidence type="ECO:0000256" key="3">
    <source>
        <dbReference type="SAM" id="MobiDB-lite"/>
    </source>
</evidence>
<evidence type="ECO:0000305" key="4"/>
<protein>
    <recommendedName>
        <fullName>Catalase C</fullName>
        <ecNumber>1.11.1.6</ecNumber>
    </recommendedName>
    <alternativeName>
        <fullName>KAT2</fullName>
    </alternativeName>
</protein>
<comment type="function">
    <text>Decomposes hydrogen peroxide into water and oxygen; serves to protect cells from the toxic effects of hydrogen peroxide. Could protect cells in nodules which have a high potential to produce hydrogen peroxide because of the strong reducing conditions required for nitrogen fixation and the action of several proteins.</text>
</comment>
<comment type="catalytic activity">
    <reaction evidence="2">
        <text>2 H2O2 = O2 + 2 H2O</text>
        <dbReference type="Rhea" id="RHEA:20309"/>
        <dbReference type="ChEBI" id="CHEBI:15377"/>
        <dbReference type="ChEBI" id="CHEBI:15379"/>
        <dbReference type="ChEBI" id="CHEBI:16240"/>
        <dbReference type="EC" id="1.11.1.6"/>
    </reaction>
</comment>
<comment type="cofactor">
    <cofactor>
        <name>heme</name>
        <dbReference type="ChEBI" id="CHEBI:30413"/>
    </cofactor>
</comment>
<comment type="induction">
    <text>A threefold increase of the activity arises after exposure to heat stress (37 degrees Celsius), to sodium chloride or ethanol for one hour. Not inducible by hydrogen peroxide.</text>
</comment>
<comment type="miscellaneous">
    <text>Either KatA or KatC is absolutely required for the protection of the nitrogen fixation process.</text>
</comment>
<comment type="similarity">
    <text evidence="4">Belongs to the catalase family. HPII subfamily.</text>
</comment>
<geneLocation type="plasmid">
    <name>pSymB</name>
    <name>megaplasmid 2</name>
</geneLocation>
<reference key="1">
    <citation type="journal article" date="1999" name="J. Bacteriol.">
        <title>Differential regulation of two divergent Sinorhizobium meliloti genes for HPII-like catalases during free-living growth and protective role of both catalases during symbiosis.</title>
        <authorList>
            <person name="Sigaud S."/>
            <person name="Becquet V."/>
            <person name="Frendo P."/>
            <person name="Puppo A."/>
            <person name="Herouart D."/>
        </authorList>
    </citation>
    <scope>NUCLEOTIDE SEQUENCE [GENOMIC DNA]</scope>
    <source>
        <strain>RCR2011 / SU47</strain>
    </source>
</reference>
<reference key="2">
    <citation type="journal article" date="2001" name="Proc. Natl. Acad. Sci. U.S.A.">
        <title>The complete sequence of the 1,683-kb pSymB megaplasmid from the N2-fixing endosymbiont Sinorhizobium meliloti.</title>
        <authorList>
            <person name="Finan T.M."/>
            <person name="Weidner S."/>
            <person name="Wong K."/>
            <person name="Buhrmester J."/>
            <person name="Chain P."/>
            <person name="Vorhoelter F.J."/>
            <person name="Hernandez-Lucas I."/>
            <person name="Becker A."/>
            <person name="Cowie A."/>
            <person name="Gouzy J."/>
            <person name="Golding B."/>
            <person name="Puehler A."/>
        </authorList>
    </citation>
    <scope>NUCLEOTIDE SEQUENCE [LARGE SCALE GENOMIC DNA]</scope>
    <source>
        <strain>1021</strain>
    </source>
</reference>
<reference key="3">
    <citation type="journal article" date="2001" name="Science">
        <title>The composite genome of the legume symbiont Sinorhizobium meliloti.</title>
        <authorList>
            <person name="Galibert F."/>
            <person name="Finan T.M."/>
            <person name="Long S.R."/>
            <person name="Puehler A."/>
            <person name="Abola P."/>
            <person name="Ampe F."/>
            <person name="Barloy-Hubler F."/>
            <person name="Barnett M.J."/>
            <person name="Becker A."/>
            <person name="Boistard P."/>
            <person name="Bothe G."/>
            <person name="Boutry M."/>
            <person name="Bowser L."/>
            <person name="Buhrmester J."/>
            <person name="Cadieu E."/>
            <person name="Capela D."/>
            <person name="Chain P."/>
            <person name="Cowie A."/>
            <person name="Davis R.W."/>
            <person name="Dreano S."/>
            <person name="Federspiel N.A."/>
            <person name="Fisher R.F."/>
            <person name="Gloux S."/>
            <person name="Godrie T."/>
            <person name="Goffeau A."/>
            <person name="Golding B."/>
            <person name="Gouzy J."/>
            <person name="Gurjal M."/>
            <person name="Hernandez-Lucas I."/>
            <person name="Hong A."/>
            <person name="Huizar L."/>
            <person name="Hyman R.W."/>
            <person name="Jones T."/>
            <person name="Kahn D."/>
            <person name="Kahn M.L."/>
            <person name="Kalman S."/>
            <person name="Keating D.H."/>
            <person name="Kiss E."/>
            <person name="Komp C."/>
            <person name="Lelaure V."/>
            <person name="Masuy D."/>
            <person name="Palm C."/>
            <person name="Peck M.C."/>
            <person name="Pohl T.M."/>
            <person name="Portetelle D."/>
            <person name="Purnelle B."/>
            <person name="Ramsperger U."/>
            <person name="Surzycki R."/>
            <person name="Thebault P."/>
            <person name="Vandenbol M."/>
            <person name="Vorhoelter F.J."/>
            <person name="Weidner S."/>
            <person name="Wells D.H."/>
            <person name="Wong K."/>
            <person name="Yeh K.-C."/>
            <person name="Batut J."/>
        </authorList>
    </citation>
    <scope>NUCLEOTIDE SEQUENCE [LARGE SCALE GENOMIC DNA]</scope>
    <source>
        <strain>1021</strain>
    </source>
</reference>
<dbReference type="EC" id="1.11.1.6"/>
<dbReference type="EMBL" id="AF121348">
    <property type="protein sequence ID" value="AAD21077.1"/>
    <property type="molecule type" value="Genomic_DNA"/>
</dbReference>
<dbReference type="EMBL" id="AL591985">
    <property type="protein sequence ID" value="CAC48410.1"/>
    <property type="molecule type" value="Genomic_DNA"/>
</dbReference>
<dbReference type="PIR" id="B95843">
    <property type="entry name" value="B95843"/>
</dbReference>
<dbReference type="RefSeq" id="NP_436550.1">
    <property type="nucleotide sequence ID" value="NC_003078.1"/>
</dbReference>
<dbReference type="RefSeq" id="WP_010974935.1">
    <property type="nucleotide sequence ID" value="NC_003078.1"/>
</dbReference>
<dbReference type="SMR" id="Q9X576"/>
<dbReference type="PeroxiBase" id="6330">
    <property type="entry name" value="SmeKat02"/>
</dbReference>
<dbReference type="EnsemblBacteria" id="CAC48410">
    <property type="protein sequence ID" value="CAC48410"/>
    <property type="gene ID" value="SM_b20007"/>
</dbReference>
<dbReference type="KEGG" id="sme:SM_b20007"/>
<dbReference type="PATRIC" id="fig|266834.11.peg.4913"/>
<dbReference type="eggNOG" id="COG0753">
    <property type="taxonomic scope" value="Bacteria"/>
</dbReference>
<dbReference type="HOGENOM" id="CLU_010645_3_0_5"/>
<dbReference type="OrthoDB" id="9761719at2"/>
<dbReference type="Proteomes" id="UP000001976">
    <property type="component" value="Plasmid pSymB"/>
</dbReference>
<dbReference type="GO" id="GO:0005829">
    <property type="term" value="C:cytosol"/>
    <property type="evidence" value="ECO:0007669"/>
    <property type="project" value="TreeGrafter"/>
</dbReference>
<dbReference type="GO" id="GO:0004096">
    <property type="term" value="F:catalase activity"/>
    <property type="evidence" value="ECO:0007669"/>
    <property type="project" value="UniProtKB-EC"/>
</dbReference>
<dbReference type="GO" id="GO:0020037">
    <property type="term" value="F:heme binding"/>
    <property type="evidence" value="ECO:0007669"/>
    <property type="project" value="InterPro"/>
</dbReference>
<dbReference type="GO" id="GO:0046872">
    <property type="term" value="F:metal ion binding"/>
    <property type="evidence" value="ECO:0007669"/>
    <property type="project" value="UniProtKB-KW"/>
</dbReference>
<dbReference type="GO" id="GO:0042744">
    <property type="term" value="P:hydrogen peroxide catabolic process"/>
    <property type="evidence" value="ECO:0007669"/>
    <property type="project" value="UniProtKB-KW"/>
</dbReference>
<dbReference type="GO" id="GO:0006979">
    <property type="term" value="P:response to oxidative stress"/>
    <property type="evidence" value="ECO:0007669"/>
    <property type="project" value="InterPro"/>
</dbReference>
<dbReference type="CDD" id="cd08155">
    <property type="entry name" value="catalase_clade_2"/>
    <property type="match status" value="1"/>
</dbReference>
<dbReference type="CDD" id="cd03132">
    <property type="entry name" value="GATase1_catalase"/>
    <property type="match status" value="1"/>
</dbReference>
<dbReference type="FunFam" id="2.40.180.10:FF:000003">
    <property type="entry name" value="Catalase"/>
    <property type="match status" value="1"/>
</dbReference>
<dbReference type="Gene3D" id="1.20.1370.20">
    <property type="match status" value="1"/>
</dbReference>
<dbReference type="Gene3D" id="3.40.50.880">
    <property type="match status" value="1"/>
</dbReference>
<dbReference type="Gene3D" id="2.40.180.10">
    <property type="entry name" value="Catalase core domain"/>
    <property type="match status" value="1"/>
</dbReference>
<dbReference type="InterPro" id="IPR018028">
    <property type="entry name" value="Catalase"/>
</dbReference>
<dbReference type="InterPro" id="IPR024708">
    <property type="entry name" value="Catalase_AS"/>
</dbReference>
<dbReference type="InterPro" id="IPR024712">
    <property type="entry name" value="Catalase_clade2"/>
</dbReference>
<dbReference type="InterPro" id="IPR043156">
    <property type="entry name" value="Catalase_clade2_helical"/>
</dbReference>
<dbReference type="InterPro" id="IPR011614">
    <property type="entry name" value="Catalase_core"/>
</dbReference>
<dbReference type="InterPro" id="IPR002226">
    <property type="entry name" value="Catalase_haem_BS"/>
</dbReference>
<dbReference type="InterPro" id="IPR010582">
    <property type="entry name" value="Catalase_immune_responsive"/>
</dbReference>
<dbReference type="InterPro" id="IPR041399">
    <property type="entry name" value="Catalase_large_C"/>
</dbReference>
<dbReference type="InterPro" id="IPR020835">
    <property type="entry name" value="Catalase_sf"/>
</dbReference>
<dbReference type="InterPro" id="IPR029062">
    <property type="entry name" value="Class_I_gatase-like"/>
</dbReference>
<dbReference type="PANTHER" id="PTHR42821">
    <property type="entry name" value="CATALASE"/>
    <property type="match status" value="1"/>
</dbReference>
<dbReference type="PANTHER" id="PTHR42821:SF1">
    <property type="entry name" value="CATALASE-B"/>
    <property type="match status" value="1"/>
</dbReference>
<dbReference type="Pfam" id="PF00199">
    <property type="entry name" value="Catalase"/>
    <property type="match status" value="1"/>
</dbReference>
<dbReference type="Pfam" id="PF06628">
    <property type="entry name" value="Catalase-rel"/>
    <property type="match status" value="1"/>
</dbReference>
<dbReference type="Pfam" id="PF18011">
    <property type="entry name" value="Catalase_C"/>
    <property type="match status" value="1"/>
</dbReference>
<dbReference type="PIRSF" id="PIRSF038927">
    <property type="entry name" value="Catalase_clade2"/>
    <property type="match status" value="1"/>
</dbReference>
<dbReference type="PRINTS" id="PR00067">
    <property type="entry name" value="CATALASE"/>
</dbReference>
<dbReference type="SMART" id="SM01060">
    <property type="entry name" value="Catalase"/>
    <property type="match status" value="1"/>
</dbReference>
<dbReference type="SUPFAM" id="SSF52317">
    <property type="entry name" value="Class I glutamine amidotransferase-like"/>
    <property type="match status" value="1"/>
</dbReference>
<dbReference type="SUPFAM" id="SSF56634">
    <property type="entry name" value="Heme-dependent catalase-like"/>
    <property type="match status" value="1"/>
</dbReference>
<dbReference type="PROSITE" id="PS00437">
    <property type="entry name" value="CATALASE_1"/>
    <property type="match status" value="1"/>
</dbReference>
<dbReference type="PROSITE" id="PS00438">
    <property type="entry name" value="CATALASE_2"/>
    <property type="match status" value="1"/>
</dbReference>
<dbReference type="PROSITE" id="PS51402">
    <property type="entry name" value="CATALASE_3"/>
    <property type="match status" value="1"/>
</dbReference>
<organism>
    <name type="scientific">Rhizobium meliloti (strain 1021)</name>
    <name type="common">Ensifer meliloti</name>
    <name type="synonym">Sinorhizobium meliloti</name>
    <dbReference type="NCBI Taxonomy" id="266834"/>
    <lineage>
        <taxon>Bacteria</taxon>
        <taxon>Pseudomonadati</taxon>
        <taxon>Pseudomonadota</taxon>
        <taxon>Alphaproteobacteria</taxon>
        <taxon>Hyphomicrobiales</taxon>
        <taxon>Rhizobiaceae</taxon>
        <taxon>Sinorhizobium/Ensifer group</taxon>
        <taxon>Sinorhizobium</taxon>
    </lineage>
</organism>
<keyword id="KW-0349">Heme</keyword>
<keyword id="KW-0376">Hydrogen peroxide</keyword>
<keyword id="KW-0408">Iron</keyword>
<keyword id="KW-0479">Metal-binding</keyword>
<keyword id="KW-0560">Oxidoreductase</keyword>
<keyword id="KW-0575">Peroxidase</keyword>
<keyword id="KW-0614">Plasmid</keyword>
<keyword id="KW-1185">Reference proteome</keyword>
<gene>
    <name type="primary">katE</name>
    <name type="synonym">catC</name>
    <name type="synonym">katC</name>
    <name type="ordered locus">RB0010</name>
    <name type="ORF">SMb20007</name>
</gene>
<accession>Q9X576</accession>
<proteinExistence type="evidence at transcript level"/>
<name>CATE_RHIME</name>